<comment type="function">
    <text evidence="1">Translocates 4-amino-4-deoxy-L-arabinose-phosphoundecaprenol (alpha-L-Ara4N-phosphoundecaprenol) from the cytoplasmic to the periplasmic side of the inner membrane.</text>
</comment>
<comment type="pathway">
    <text evidence="1">Bacterial outer membrane biogenesis; lipopolysaccharide biosynthesis.</text>
</comment>
<comment type="subunit">
    <text evidence="1">Heterodimer of ArnE and ArnF.</text>
</comment>
<comment type="subcellular location">
    <subcellularLocation>
        <location evidence="1">Cell inner membrane</location>
        <topology evidence="1">Multi-pass membrane protein</topology>
    </subcellularLocation>
</comment>
<comment type="similarity">
    <text evidence="1">Belongs to the ArnF family.</text>
</comment>
<gene>
    <name evidence="1" type="primary">arnF</name>
    <name type="ordered locus">ECSE_2518</name>
</gene>
<protein>
    <recommendedName>
        <fullName evidence="1">Probable 4-amino-4-deoxy-L-arabinose-phosphoundecaprenol flippase subunit ArnF</fullName>
        <shortName evidence="1">L-Ara4N-phosphoundecaprenol flippase subunit ArnF</shortName>
    </recommendedName>
    <alternativeName>
        <fullName evidence="1">Undecaprenyl phosphate-aminoarabinose flippase subunit ArnF</fullName>
    </alternativeName>
</protein>
<dbReference type="EMBL" id="AP009240">
    <property type="protein sequence ID" value="BAG78042.1"/>
    <property type="molecule type" value="Genomic_DNA"/>
</dbReference>
<dbReference type="RefSeq" id="WP_000523005.1">
    <property type="nucleotide sequence ID" value="NC_011415.1"/>
</dbReference>
<dbReference type="GeneID" id="75205691"/>
<dbReference type="KEGG" id="ecy:ECSE_2518"/>
<dbReference type="HOGENOM" id="CLU_131462_1_0_6"/>
<dbReference type="UniPathway" id="UPA00030"/>
<dbReference type="Proteomes" id="UP000008199">
    <property type="component" value="Chromosome"/>
</dbReference>
<dbReference type="GO" id="GO:0005886">
    <property type="term" value="C:plasma membrane"/>
    <property type="evidence" value="ECO:0007669"/>
    <property type="project" value="UniProtKB-SubCell"/>
</dbReference>
<dbReference type="GO" id="GO:1901505">
    <property type="term" value="F:carbohydrate derivative transmembrane transporter activity"/>
    <property type="evidence" value="ECO:0007669"/>
    <property type="project" value="InterPro"/>
</dbReference>
<dbReference type="GO" id="GO:0009245">
    <property type="term" value="P:lipid A biosynthetic process"/>
    <property type="evidence" value="ECO:0007669"/>
    <property type="project" value="UniProtKB-UniRule"/>
</dbReference>
<dbReference type="GO" id="GO:0009103">
    <property type="term" value="P:lipopolysaccharide biosynthetic process"/>
    <property type="evidence" value="ECO:0007669"/>
    <property type="project" value="UniProtKB-UniRule"/>
</dbReference>
<dbReference type="FunFam" id="1.10.3730.20:FF:000003">
    <property type="entry name" value="Probable 4-amino-4-deoxy-L-arabinose-phosphoundecaprenol flippase subunit ArnF"/>
    <property type="match status" value="1"/>
</dbReference>
<dbReference type="Gene3D" id="1.10.3730.20">
    <property type="match status" value="1"/>
</dbReference>
<dbReference type="HAMAP" id="MF_00538">
    <property type="entry name" value="Flippase_ArnF"/>
    <property type="match status" value="1"/>
</dbReference>
<dbReference type="InterPro" id="IPR022832">
    <property type="entry name" value="Flippase_ArnF"/>
</dbReference>
<dbReference type="InterPro" id="IPR000390">
    <property type="entry name" value="Small_drug/metabolite_transptr"/>
</dbReference>
<dbReference type="NCBIfam" id="NF002816">
    <property type="entry name" value="PRK02971.1-2"/>
    <property type="match status" value="1"/>
</dbReference>
<dbReference type="PANTHER" id="PTHR30561:SF9">
    <property type="entry name" value="4-AMINO-4-DEOXY-L-ARABINOSE-PHOSPHOUNDECAPRENOL FLIPPASE SUBUNIT ARNF-RELATED"/>
    <property type="match status" value="1"/>
</dbReference>
<dbReference type="PANTHER" id="PTHR30561">
    <property type="entry name" value="SMR FAMILY PROTON-DEPENDENT DRUG EFFLUX TRANSPORTER SUGE"/>
    <property type="match status" value="1"/>
</dbReference>
<dbReference type="SUPFAM" id="SSF103481">
    <property type="entry name" value="Multidrug resistance efflux transporter EmrE"/>
    <property type="match status" value="1"/>
</dbReference>
<feature type="chain" id="PRO_1000128662" description="Probable 4-amino-4-deoxy-L-arabinose-phosphoundecaprenol flippase subunit ArnF">
    <location>
        <begin position="1"/>
        <end position="128"/>
    </location>
</feature>
<feature type="topological domain" description="Cytoplasmic" evidence="1">
    <location>
        <begin position="1"/>
        <end position="2"/>
    </location>
</feature>
<feature type="transmembrane region" description="Helical" evidence="1">
    <location>
        <begin position="3"/>
        <end position="23"/>
    </location>
</feature>
<feature type="topological domain" description="Periplasmic" evidence="1">
    <location>
        <begin position="24"/>
        <end position="35"/>
    </location>
</feature>
<feature type="transmembrane region" description="Helical" evidence="1">
    <location>
        <begin position="36"/>
        <end position="56"/>
    </location>
</feature>
<feature type="topological domain" description="Cytoplasmic" evidence="1">
    <location>
        <begin position="57"/>
        <end position="76"/>
    </location>
</feature>
<feature type="transmembrane region" description="Helical" evidence="1">
    <location>
        <begin position="77"/>
        <end position="97"/>
    </location>
</feature>
<feature type="topological domain" description="Periplasmic" evidence="1">
    <location>
        <begin position="98"/>
        <end position="100"/>
    </location>
</feature>
<feature type="transmembrane region" description="Helical" evidence="1">
    <location>
        <begin position="101"/>
        <end position="121"/>
    </location>
</feature>
<feature type="topological domain" description="Cytoplasmic" evidence="1">
    <location>
        <begin position="122"/>
        <end position="128"/>
    </location>
</feature>
<keyword id="KW-0997">Cell inner membrane</keyword>
<keyword id="KW-1003">Cell membrane</keyword>
<keyword id="KW-0441">Lipid A biosynthesis</keyword>
<keyword id="KW-0444">Lipid biosynthesis</keyword>
<keyword id="KW-0443">Lipid metabolism</keyword>
<keyword id="KW-0448">Lipopolysaccharide biosynthesis</keyword>
<keyword id="KW-0472">Membrane</keyword>
<keyword id="KW-0812">Transmembrane</keyword>
<keyword id="KW-1133">Transmembrane helix</keyword>
<keyword id="KW-0813">Transport</keyword>
<proteinExistence type="inferred from homology"/>
<organism>
    <name type="scientific">Escherichia coli (strain SE11)</name>
    <dbReference type="NCBI Taxonomy" id="409438"/>
    <lineage>
        <taxon>Bacteria</taxon>
        <taxon>Pseudomonadati</taxon>
        <taxon>Pseudomonadota</taxon>
        <taxon>Gammaproteobacteria</taxon>
        <taxon>Enterobacterales</taxon>
        <taxon>Enterobacteriaceae</taxon>
        <taxon>Escherichia</taxon>
    </lineage>
</organism>
<reference key="1">
    <citation type="journal article" date="2008" name="DNA Res.">
        <title>Complete genome sequence and comparative analysis of the wild-type commensal Escherichia coli strain SE11 isolated from a healthy adult.</title>
        <authorList>
            <person name="Oshima K."/>
            <person name="Toh H."/>
            <person name="Ogura Y."/>
            <person name="Sasamoto H."/>
            <person name="Morita H."/>
            <person name="Park S.-H."/>
            <person name="Ooka T."/>
            <person name="Iyoda S."/>
            <person name="Taylor T.D."/>
            <person name="Hayashi T."/>
            <person name="Itoh K."/>
            <person name="Hattori M."/>
        </authorList>
    </citation>
    <scope>NUCLEOTIDE SEQUENCE [LARGE SCALE GENOMIC DNA]</scope>
    <source>
        <strain>SE11</strain>
    </source>
</reference>
<name>ARNF_ECOSE</name>
<evidence type="ECO:0000255" key="1">
    <source>
        <dbReference type="HAMAP-Rule" id="MF_00538"/>
    </source>
</evidence>
<sequence>MGLIWGLFSVIIASVAQLSLGFAASHLPPMTHLWDFIAALLAFGLDARILLLGLLGYLLSVFCWYKTLHKLALSKAYALLSMSYVLVWIASMVLPGWEGTFSLKALLGVACIMSGLMLIFLPTTKQRY</sequence>
<accession>B6I7K2</accession>